<dbReference type="EMBL" id="AL603745">
    <property type="status" value="NOT_ANNOTATED_CDS"/>
    <property type="molecule type" value="Genomic_DNA"/>
</dbReference>
<dbReference type="EMBL" id="BC018399">
    <property type="protein sequence ID" value="AAH18399.1"/>
    <property type="molecule type" value="mRNA"/>
</dbReference>
<dbReference type="CCDS" id="CCDS25152.1"/>
<dbReference type="RefSeq" id="NP_663406.2">
    <property type="nucleotide sequence ID" value="NM_145431.2"/>
</dbReference>
<dbReference type="SMR" id="Q8VEJ4"/>
<dbReference type="BioGRID" id="229831">
    <property type="interactions" value="20"/>
</dbReference>
<dbReference type="FunCoup" id="Q8VEJ4">
    <property type="interactions" value="2200"/>
</dbReference>
<dbReference type="STRING" id="10090.ENSMUSP00000099502"/>
<dbReference type="GlyGen" id="Q8VEJ4">
    <property type="glycosylation" value="1 site"/>
</dbReference>
<dbReference type="iPTMnet" id="Q8VEJ4"/>
<dbReference type="PhosphoSitePlus" id="Q8VEJ4"/>
<dbReference type="PaxDb" id="10090-ENSMUSP00000099502"/>
<dbReference type="PeptideAtlas" id="Q8VEJ4"/>
<dbReference type="ProteomicsDB" id="293572"/>
<dbReference type="Pumba" id="Q8VEJ4"/>
<dbReference type="Antibodypedia" id="15565">
    <property type="antibodies" value="235 antibodies from 31 providers"/>
</dbReference>
<dbReference type="DNASU" id="217011"/>
<dbReference type="Ensembl" id="ENSMUST00000103213.10">
    <property type="protein sequence ID" value="ENSMUSP00000099502.4"/>
    <property type="gene ID" value="ENSMUSG00000020692.15"/>
</dbReference>
<dbReference type="GeneID" id="217011"/>
<dbReference type="KEGG" id="mmu:217011"/>
<dbReference type="UCSC" id="uc007knt.2">
    <property type="organism name" value="mouse"/>
</dbReference>
<dbReference type="AGR" id="MGI:2429770"/>
<dbReference type="CTD" id="54475"/>
<dbReference type="MGI" id="MGI:2429770">
    <property type="gene designation" value="Nle1"/>
</dbReference>
<dbReference type="VEuPathDB" id="HostDB:ENSMUSG00000020692"/>
<dbReference type="eggNOG" id="KOG0271">
    <property type="taxonomic scope" value="Eukaryota"/>
</dbReference>
<dbReference type="GeneTree" id="ENSGT00940000157881"/>
<dbReference type="HOGENOM" id="CLU_000288_57_16_1"/>
<dbReference type="InParanoid" id="Q8VEJ4"/>
<dbReference type="OMA" id="AWEPYHR"/>
<dbReference type="OrthoDB" id="10267436at2759"/>
<dbReference type="PhylomeDB" id="Q8VEJ4"/>
<dbReference type="TreeFam" id="TF300668"/>
<dbReference type="BioGRID-ORCS" id="217011">
    <property type="hits" value="22 hits in 68 CRISPR screens"/>
</dbReference>
<dbReference type="PRO" id="PR:Q8VEJ4"/>
<dbReference type="Proteomes" id="UP000000589">
    <property type="component" value="Chromosome 11"/>
</dbReference>
<dbReference type="RNAct" id="Q8VEJ4">
    <property type="molecule type" value="protein"/>
</dbReference>
<dbReference type="Bgee" id="ENSMUSG00000020692">
    <property type="expression patterns" value="Expressed in embryonic brain and 148 other cell types or tissues"/>
</dbReference>
<dbReference type="ExpressionAtlas" id="Q8VEJ4">
    <property type="expression patterns" value="baseline and differential"/>
</dbReference>
<dbReference type="GO" id="GO:0005730">
    <property type="term" value="C:nucleolus"/>
    <property type="evidence" value="ECO:0000314"/>
    <property type="project" value="MGI"/>
</dbReference>
<dbReference type="GO" id="GO:0005654">
    <property type="term" value="C:nucleoplasm"/>
    <property type="evidence" value="ECO:0007669"/>
    <property type="project" value="Ensembl"/>
</dbReference>
<dbReference type="GO" id="GO:0061484">
    <property type="term" value="P:hematopoietic stem cell homeostasis"/>
    <property type="evidence" value="ECO:0000315"/>
    <property type="project" value="MGI"/>
</dbReference>
<dbReference type="GO" id="GO:0001826">
    <property type="term" value="P:inner cell mass cell differentiation"/>
    <property type="evidence" value="ECO:0000315"/>
    <property type="project" value="MGI"/>
</dbReference>
<dbReference type="GO" id="GO:0001822">
    <property type="term" value="P:kidney development"/>
    <property type="evidence" value="ECO:0000315"/>
    <property type="project" value="MGI"/>
</dbReference>
<dbReference type="GO" id="GO:0000278">
    <property type="term" value="P:mitotic cell cycle"/>
    <property type="evidence" value="ECO:0000315"/>
    <property type="project" value="MGI"/>
</dbReference>
<dbReference type="GO" id="GO:0045930">
    <property type="term" value="P:negative regulation of mitotic cell cycle"/>
    <property type="evidence" value="ECO:0000315"/>
    <property type="project" value="MGI"/>
</dbReference>
<dbReference type="GO" id="GO:0007219">
    <property type="term" value="P:Notch signaling pathway"/>
    <property type="evidence" value="ECO:0000314"/>
    <property type="project" value="MGI"/>
</dbReference>
<dbReference type="GO" id="GO:0090263">
    <property type="term" value="P:positive regulation of canonical Wnt signaling pathway"/>
    <property type="evidence" value="ECO:0000315"/>
    <property type="project" value="MGI"/>
</dbReference>
<dbReference type="GO" id="GO:0042273">
    <property type="term" value="P:ribosomal large subunit biogenesis"/>
    <property type="evidence" value="ECO:0000315"/>
    <property type="project" value="MGI"/>
</dbReference>
<dbReference type="GO" id="GO:0048705">
    <property type="term" value="P:skeletal system morphogenesis"/>
    <property type="evidence" value="ECO:0000315"/>
    <property type="project" value="MGI"/>
</dbReference>
<dbReference type="GO" id="GO:0001756">
    <property type="term" value="P:somitogenesis"/>
    <property type="evidence" value="ECO:0000315"/>
    <property type="project" value="MGI"/>
</dbReference>
<dbReference type="CDD" id="cd00200">
    <property type="entry name" value="WD40"/>
    <property type="match status" value="1"/>
</dbReference>
<dbReference type="FunFam" id="2.130.10.10:FF:000129">
    <property type="entry name" value="Notchless homolog 1 (Drosophila)"/>
    <property type="match status" value="1"/>
</dbReference>
<dbReference type="Gene3D" id="2.130.10.10">
    <property type="entry name" value="YVTN repeat-like/Quinoprotein amine dehydrogenase"/>
    <property type="match status" value="1"/>
</dbReference>
<dbReference type="InterPro" id="IPR020472">
    <property type="entry name" value="G-protein_beta_WD-40_rep"/>
</dbReference>
<dbReference type="InterPro" id="IPR001632">
    <property type="entry name" value="Gprotein_B"/>
</dbReference>
<dbReference type="InterPro" id="IPR012972">
    <property type="entry name" value="NLE"/>
</dbReference>
<dbReference type="InterPro" id="IPR015943">
    <property type="entry name" value="WD40/YVTN_repeat-like_dom_sf"/>
</dbReference>
<dbReference type="InterPro" id="IPR019775">
    <property type="entry name" value="WD40_repeat_CS"/>
</dbReference>
<dbReference type="InterPro" id="IPR036322">
    <property type="entry name" value="WD40_repeat_dom_sf"/>
</dbReference>
<dbReference type="InterPro" id="IPR001680">
    <property type="entry name" value="WD40_rpt"/>
</dbReference>
<dbReference type="PANTHER" id="PTHR19848:SF0">
    <property type="entry name" value="NOTCHLESS PROTEIN HOMOLOG 1"/>
    <property type="match status" value="1"/>
</dbReference>
<dbReference type="PANTHER" id="PTHR19848">
    <property type="entry name" value="WD40 REPEAT PROTEIN"/>
    <property type="match status" value="1"/>
</dbReference>
<dbReference type="Pfam" id="PF08154">
    <property type="entry name" value="NLE"/>
    <property type="match status" value="1"/>
</dbReference>
<dbReference type="Pfam" id="PF00400">
    <property type="entry name" value="WD40"/>
    <property type="match status" value="7"/>
</dbReference>
<dbReference type="PRINTS" id="PR00319">
    <property type="entry name" value="GPROTEINB"/>
</dbReference>
<dbReference type="PRINTS" id="PR00320">
    <property type="entry name" value="GPROTEINBRPT"/>
</dbReference>
<dbReference type="SMART" id="SM00320">
    <property type="entry name" value="WD40"/>
    <property type="match status" value="8"/>
</dbReference>
<dbReference type="SUPFAM" id="SSF50978">
    <property type="entry name" value="WD40 repeat-like"/>
    <property type="match status" value="1"/>
</dbReference>
<dbReference type="PROSITE" id="PS00678">
    <property type="entry name" value="WD_REPEATS_1"/>
    <property type="match status" value="4"/>
</dbReference>
<dbReference type="PROSITE" id="PS50082">
    <property type="entry name" value="WD_REPEATS_2"/>
    <property type="match status" value="7"/>
</dbReference>
<dbReference type="PROSITE" id="PS50294">
    <property type="entry name" value="WD_REPEATS_REGION"/>
    <property type="match status" value="1"/>
</dbReference>
<organism>
    <name type="scientific">Mus musculus</name>
    <name type="common">Mouse</name>
    <dbReference type="NCBI Taxonomy" id="10090"/>
    <lineage>
        <taxon>Eukaryota</taxon>
        <taxon>Metazoa</taxon>
        <taxon>Chordata</taxon>
        <taxon>Craniata</taxon>
        <taxon>Vertebrata</taxon>
        <taxon>Euteleostomi</taxon>
        <taxon>Mammalia</taxon>
        <taxon>Eutheria</taxon>
        <taxon>Euarchontoglires</taxon>
        <taxon>Glires</taxon>
        <taxon>Rodentia</taxon>
        <taxon>Myomorpha</taxon>
        <taxon>Muroidea</taxon>
        <taxon>Muridae</taxon>
        <taxon>Murinae</taxon>
        <taxon>Mus</taxon>
        <taxon>Mus</taxon>
    </lineage>
</organism>
<name>NLE1_MOUSE</name>
<proteinExistence type="evidence at protein level"/>
<evidence type="ECO:0000250" key="1"/>
<evidence type="ECO:0000250" key="2">
    <source>
        <dbReference type="UniProtKB" id="Q9NVX2"/>
    </source>
</evidence>
<evidence type="ECO:0000269" key="3">
    <source>
    </source>
</evidence>
<evidence type="ECO:0000269" key="4">
    <source>
    </source>
</evidence>
<evidence type="ECO:0000305" key="5"/>
<accession>Q8VEJ4</accession>
<accession>B1ARD5</accession>
<feature type="initiator methionine" description="Removed" evidence="2">
    <location>
        <position position="1"/>
    </location>
</feature>
<feature type="chain" id="PRO_0000051099" description="Notchless protein homolog 1">
    <location>
        <begin position="2"/>
        <end position="485"/>
    </location>
</feature>
<feature type="repeat" description="WD 1">
    <location>
        <begin position="112"/>
        <end position="151"/>
    </location>
</feature>
<feature type="repeat" description="WD 2">
    <location>
        <begin position="154"/>
        <end position="193"/>
    </location>
</feature>
<feature type="repeat" description="WD 3">
    <location>
        <begin position="197"/>
        <end position="241"/>
    </location>
</feature>
<feature type="repeat" description="WD 4">
    <location>
        <begin position="244"/>
        <end position="282"/>
    </location>
</feature>
<feature type="repeat" description="WD 5">
    <location>
        <begin position="327"/>
        <end position="366"/>
    </location>
</feature>
<feature type="repeat" description="WD 6">
    <location>
        <begin position="370"/>
        <end position="409"/>
    </location>
</feature>
<feature type="repeat" description="WD 7">
    <location>
        <begin position="412"/>
        <end position="451"/>
    </location>
</feature>
<feature type="repeat" description="WD 8">
    <location>
        <begin position="454"/>
        <end position="484"/>
    </location>
</feature>
<feature type="modified residue" description="N-acetylalanine" evidence="2">
    <location>
        <position position="2"/>
    </location>
</feature>
<feature type="modified residue" description="Phosphoserine" evidence="2">
    <location>
        <position position="79"/>
    </location>
</feature>
<feature type="mutagenesis site" description="In l11Jus4; embryos survive through implantation but fail prior to gastrulation." evidence="4">
    <original>S</original>
    <variation>P</variation>
    <location>
        <position position="163"/>
    </location>
</feature>
<feature type="mutagenesis site" description="In l11Jus1; embryos survive through implantation but fail prior to gastrulation. Cdkna1 expression is up-regulated while expression of several Wnt pathway members is down-regulated." evidence="4">
    <original>I</original>
    <variation>S</variation>
    <location>
        <position position="396"/>
    </location>
</feature>
<feature type="sequence conflict" description="In Ref. 2; AAH18399." evidence="5" ref="2">
    <original>V</original>
    <variation>I</variation>
    <location>
        <position position="180"/>
    </location>
</feature>
<comment type="function">
    <text evidence="3 4 5">Plays a role in regulating Notch activity (Probable). Plays a role in regulating the expression of CDKN1A and several members of the Wnt pathway, probably via its effects on Notch activity. Required during embryogenesis for inner mass cell survival.</text>
</comment>
<comment type="subcellular location">
    <subcellularLocation>
        <location evidence="1">Nucleus</location>
        <location evidence="1">Nucleolus</location>
    </subcellularLocation>
</comment>
<comment type="tissue specificity">
    <text evidence="3">Highest expression in heart, brain, lung, liver, skeletal muscle and testis with lower levels in spleen and kidney.</text>
</comment>
<comment type="developmental stage">
    <text evidence="3">Expression detected in the embryo at 7.0 dpc, 11.0 dpc and 15.0 dpc and also in the adult.</text>
</comment>
<comment type="disruption phenotype">
    <text evidence="3">Embryonic lethality prior to 6.5 dpc with death of inner mass cells. Embryos implant but die shortly after.</text>
</comment>
<sequence length="485" mass="53134">MAAAVVEEAAAGDVQRLLVQFQDEGGQLLGSPFDVPVDITPDKLQLVCNALLAQEEPLPLAFYVHDAEIVSSLGKTLESQSVETEKIVDIIYQPQAVFRVRAVTRCTSSLEGHSEAVISVAFSPTGKYLASGSGDTTVRFWDLSTETPHFTCKGHRHWVLSISWSPDGKKLASGCKNGQVLLWDPSTGLQVGRTLTGHSKWITGLSWEPLHMNPECRYVASSSKDGSVRVWDTTAGRCERILTGHTQSVTCLRWGGDGLLYSASQDRTIKVWRAHDGVLCRTLQGHGHWVNTMALSTDYALRTGAFEPAEATVNAQDLQGSLKELKERASSRYNLVRGQGPERLVSGSDDFTLFLWSPAEDKKPLARMTGHQALINQVLFSPDSRIVASASFDKSIKLWDGRTGKYLASLRGHVAAVYQIAWSADSRLLVSGSSDSTLKVWDVKAQKLATDLPGHADEVYAVDWSPDGQRVASGGKDKCLRIWRR</sequence>
<protein>
    <recommendedName>
        <fullName>Notchless protein homolog 1</fullName>
    </recommendedName>
</protein>
<gene>
    <name type="primary">Nle1</name>
</gene>
<keyword id="KW-0007">Acetylation</keyword>
<keyword id="KW-0914">Notch signaling pathway</keyword>
<keyword id="KW-0539">Nucleus</keyword>
<keyword id="KW-0597">Phosphoprotein</keyword>
<keyword id="KW-1185">Reference proteome</keyword>
<keyword id="KW-0677">Repeat</keyword>
<keyword id="KW-0853">WD repeat</keyword>
<reference key="1">
    <citation type="journal article" date="2009" name="PLoS Biol.">
        <title>Lineage-specific biology revealed by a finished genome assembly of the mouse.</title>
        <authorList>
            <person name="Church D.M."/>
            <person name="Goodstadt L."/>
            <person name="Hillier L.W."/>
            <person name="Zody M.C."/>
            <person name="Goldstein S."/>
            <person name="She X."/>
            <person name="Bult C.J."/>
            <person name="Agarwala R."/>
            <person name="Cherry J.L."/>
            <person name="DiCuccio M."/>
            <person name="Hlavina W."/>
            <person name="Kapustin Y."/>
            <person name="Meric P."/>
            <person name="Maglott D."/>
            <person name="Birtle Z."/>
            <person name="Marques A.C."/>
            <person name="Graves T."/>
            <person name="Zhou S."/>
            <person name="Teague B."/>
            <person name="Potamousis K."/>
            <person name="Churas C."/>
            <person name="Place M."/>
            <person name="Herschleb J."/>
            <person name="Runnheim R."/>
            <person name="Forrest D."/>
            <person name="Amos-Landgraf J."/>
            <person name="Schwartz D.C."/>
            <person name="Cheng Z."/>
            <person name="Lindblad-Toh K."/>
            <person name="Eichler E.E."/>
            <person name="Ponting C.P."/>
        </authorList>
    </citation>
    <scope>NUCLEOTIDE SEQUENCE [LARGE SCALE GENOMIC DNA]</scope>
    <source>
        <strain>C57BL/6J</strain>
    </source>
</reference>
<reference key="2">
    <citation type="journal article" date="2004" name="Genome Res.">
        <title>The status, quality, and expansion of the NIH full-length cDNA project: the Mammalian Gene Collection (MGC).</title>
        <authorList>
            <consortium name="The MGC Project Team"/>
        </authorList>
    </citation>
    <scope>NUCLEOTIDE SEQUENCE [LARGE SCALE MRNA]</scope>
    <source>
        <strain>Czech II</strain>
        <tissue>Lung</tissue>
    </source>
</reference>
<reference key="3">
    <citation type="journal article" date="2006" name="Mol. Cell. Biol.">
        <title>The murine ortholog of notchless, a direct regulator of the notch pathway in Drosophila melanogaster, is essential for survival of inner cell mass cells.</title>
        <authorList>
            <person name="Cormier S."/>
            <person name="Le Bras S."/>
            <person name="Souilhol C."/>
            <person name="Vandormael-Pournin S."/>
            <person name="Durand B."/>
            <person name="Babinet C."/>
            <person name="Baldacci P."/>
            <person name="Cohen-Tannoudji M."/>
        </authorList>
    </citation>
    <scope>FUNCTION</scope>
    <scope>TISSUE SPECIFICITY</scope>
    <scope>DEVELOPMENTAL STAGE</scope>
    <scope>DISRUPTION PHENOTYPE</scope>
</reference>
<reference key="4">
    <citation type="journal article" date="2010" name="Cell">
        <title>A tissue-specific atlas of mouse protein phosphorylation and expression.</title>
        <authorList>
            <person name="Huttlin E.L."/>
            <person name="Jedrychowski M.P."/>
            <person name="Elias J.E."/>
            <person name="Goswami T."/>
            <person name="Rad R."/>
            <person name="Beausoleil S.A."/>
            <person name="Villen J."/>
            <person name="Haas W."/>
            <person name="Sowa M.E."/>
            <person name="Gygi S.P."/>
        </authorList>
    </citation>
    <scope>IDENTIFICATION BY MASS SPECTROMETRY [LARGE SCALE ANALYSIS]</scope>
    <source>
        <tissue>Pancreas</tissue>
        <tissue>Spleen</tissue>
    </source>
</reference>
<reference key="5">
    <citation type="journal article" date="2012" name="BMC Genet.">
        <title>ENU mutagenesis reveals that Notchless homolog 1 (Drosophila) affects Cdkn1a and several members of the Wnt pathway during murine pre-implantation development.</title>
        <authorList>
            <person name="Lossie A.C."/>
            <person name="Lo C.L."/>
            <person name="Baumgarner K.M."/>
            <person name="Cramer M.J."/>
            <person name="Garner J.P."/>
            <person name="Justice M.J."/>
        </authorList>
    </citation>
    <scope>FUNCTION</scope>
    <scope>MUTAGENESIS OF SER-163 AND ILE-396</scope>
    <source>
        <strain>C57BL/6J</strain>
    </source>
</reference>